<organism>
    <name type="scientific">Clostridium botulinum (strain Loch Maree / Type A3)</name>
    <dbReference type="NCBI Taxonomy" id="498214"/>
    <lineage>
        <taxon>Bacteria</taxon>
        <taxon>Bacillati</taxon>
        <taxon>Bacillota</taxon>
        <taxon>Clostridia</taxon>
        <taxon>Eubacteriales</taxon>
        <taxon>Clostridiaceae</taxon>
        <taxon>Clostridium</taxon>
    </lineage>
</organism>
<accession>B1L0B0</accession>
<proteinExistence type="inferred from homology"/>
<gene>
    <name evidence="1" type="primary">tgt</name>
    <name type="ordered locus">CLK_2461</name>
</gene>
<keyword id="KW-0328">Glycosyltransferase</keyword>
<keyword id="KW-0479">Metal-binding</keyword>
<keyword id="KW-0671">Queuosine biosynthesis</keyword>
<keyword id="KW-0808">Transferase</keyword>
<keyword id="KW-0819">tRNA processing</keyword>
<keyword id="KW-0862">Zinc</keyword>
<name>TGT_CLOBM</name>
<reference key="1">
    <citation type="journal article" date="2007" name="PLoS ONE">
        <title>Analysis of the neurotoxin complex genes in Clostridium botulinum A1-A4 and B1 strains: BoNT/A3, /Ba4 and /B1 clusters are located within plasmids.</title>
        <authorList>
            <person name="Smith T.J."/>
            <person name="Hill K.K."/>
            <person name="Foley B.T."/>
            <person name="Detter J.C."/>
            <person name="Munk A.C."/>
            <person name="Bruce D.C."/>
            <person name="Doggett N.A."/>
            <person name="Smith L.A."/>
            <person name="Marks J.D."/>
            <person name="Xie G."/>
            <person name="Brettin T.S."/>
        </authorList>
    </citation>
    <scope>NUCLEOTIDE SEQUENCE [LARGE SCALE GENOMIC DNA]</scope>
    <source>
        <strain>Loch Maree / Type A3</strain>
    </source>
</reference>
<sequence>MYKLLKKSGKARRGEFTTPHGVIQTPVFMNVGTLAAIKGAVSSMDLKEIGCQVELSNTYHLHLRPGDEVVKKMGGLHKFMNWDRPILTDSGGFQVFSLSKIRKIQEEGVYFNSHIDGRKIFMGPEESMRIQSNLASTIAMAFDECVENPAPREYVEKSVERTTRWLHRCKDEMNRLNSLPDTINNKQMLFGINQGGTYEDIRIEHAKTIAKMDLDGYAIGGLAVGESHEDMYRIIDAVVPHLPEDKPIYLMGVGIPSNILEAVDRGVDFFDCVLPARNGRHAHVFTKEGKINLLNAKFELDDRPIDEGCQCPACKHYTRSYIRHLFKAKEMLAMRLCVLHNLYFYNNLMEEIRDAIDGDYFKEYKERKLKEWGGRA</sequence>
<evidence type="ECO:0000255" key="1">
    <source>
        <dbReference type="HAMAP-Rule" id="MF_00168"/>
    </source>
</evidence>
<protein>
    <recommendedName>
        <fullName evidence="1">Queuine tRNA-ribosyltransferase</fullName>
        <ecNumber evidence="1">2.4.2.29</ecNumber>
    </recommendedName>
    <alternativeName>
        <fullName evidence="1">Guanine insertion enzyme</fullName>
    </alternativeName>
    <alternativeName>
        <fullName evidence="1">tRNA-guanine transglycosylase</fullName>
    </alternativeName>
</protein>
<comment type="function">
    <text evidence="1">Catalyzes the base-exchange of a guanine (G) residue with the queuine precursor 7-aminomethyl-7-deazaguanine (PreQ1) at position 34 (anticodon wobble position) in tRNAs with GU(N) anticodons (tRNA-Asp, -Asn, -His and -Tyr). Catalysis occurs through a double-displacement mechanism. The nucleophile active site attacks the C1' of nucleotide 34 to detach the guanine base from the RNA, forming a covalent enzyme-RNA intermediate. The proton acceptor active site deprotonates the incoming PreQ1, allowing a nucleophilic attack on the C1' of the ribose to form the product. After dissociation, two additional enzymatic reactions on the tRNA convert PreQ1 to queuine (Q), resulting in the hypermodified nucleoside queuosine (7-(((4,5-cis-dihydroxy-2-cyclopenten-1-yl)amino)methyl)-7-deazaguanosine).</text>
</comment>
<comment type="catalytic activity">
    <reaction evidence="1">
        <text>7-aminomethyl-7-carbaguanine + guanosine(34) in tRNA = 7-aminomethyl-7-carbaguanosine(34) in tRNA + guanine</text>
        <dbReference type="Rhea" id="RHEA:24104"/>
        <dbReference type="Rhea" id="RHEA-COMP:10341"/>
        <dbReference type="Rhea" id="RHEA-COMP:10342"/>
        <dbReference type="ChEBI" id="CHEBI:16235"/>
        <dbReference type="ChEBI" id="CHEBI:58703"/>
        <dbReference type="ChEBI" id="CHEBI:74269"/>
        <dbReference type="ChEBI" id="CHEBI:82833"/>
        <dbReference type="EC" id="2.4.2.29"/>
    </reaction>
</comment>
<comment type="cofactor">
    <cofactor evidence="1">
        <name>Zn(2+)</name>
        <dbReference type="ChEBI" id="CHEBI:29105"/>
    </cofactor>
    <text evidence="1">Binds 1 zinc ion per subunit.</text>
</comment>
<comment type="pathway">
    <text evidence="1">tRNA modification; tRNA-queuosine biosynthesis.</text>
</comment>
<comment type="subunit">
    <text evidence="1">Homodimer. Within each dimer, one monomer is responsible for RNA recognition and catalysis, while the other monomer binds to the replacement base PreQ1.</text>
</comment>
<comment type="similarity">
    <text evidence="1">Belongs to the queuine tRNA-ribosyltransferase family.</text>
</comment>
<feature type="chain" id="PRO_1000097537" description="Queuine tRNA-ribosyltransferase">
    <location>
        <begin position="1"/>
        <end position="376"/>
    </location>
</feature>
<feature type="region of interest" description="RNA binding" evidence="1">
    <location>
        <begin position="252"/>
        <end position="258"/>
    </location>
</feature>
<feature type="region of interest" description="RNA binding; important for wobble base 34 recognition" evidence="1">
    <location>
        <begin position="276"/>
        <end position="280"/>
    </location>
</feature>
<feature type="active site" description="Proton acceptor" evidence="1">
    <location>
        <position position="89"/>
    </location>
</feature>
<feature type="active site" description="Nucleophile" evidence="1">
    <location>
        <position position="271"/>
    </location>
</feature>
<feature type="binding site" evidence="1">
    <location>
        <begin position="89"/>
        <end position="93"/>
    </location>
    <ligand>
        <name>substrate</name>
    </ligand>
</feature>
<feature type="binding site" evidence="1">
    <location>
        <position position="143"/>
    </location>
    <ligand>
        <name>substrate</name>
    </ligand>
</feature>
<feature type="binding site" evidence="1">
    <location>
        <position position="194"/>
    </location>
    <ligand>
        <name>substrate</name>
    </ligand>
</feature>
<feature type="binding site" evidence="1">
    <location>
        <position position="221"/>
    </location>
    <ligand>
        <name>substrate</name>
    </ligand>
</feature>
<feature type="binding site" evidence="1">
    <location>
        <position position="309"/>
    </location>
    <ligand>
        <name>Zn(2+)</name>
        <dbReference type="ChEBI" id="CHEBI:29105"/>
    </ligand>
</feature>
<feature type="binding site" evidence="1">
    <location>
        <position position="311"/>
    </location>
    <ligand>
        <name>Zn(2+)</name>
        <dbReference type="ChEBI" id="CHEBI:29105"/>
    </ligand>
</feature>
<feature type="binding site" evidence="1">
    <location>
        <position position="314"/>
    </location>
    <ligand>
        <name>Zn(2+)</name>
        <dbReference type="ChEBI" id="CHEBI:29105"/>
    </ligand>
</feature>
<feature type="binding site" evidence="1">
    <location>
        <position position="340"/>
    </location>
    <ligand>
        <name>Zn(2+)</name>
        <dbReference type="ChEBI" id="CHEBI:29105"/>
    </ligand>
</feature>
<dbReference type="EC" id="2.4.2.29" evidence="1"/>
<dbReference type="EMBL" id="CP000962">
    <property type="protein sequence ID" value="ACA56358.1"/>
    <property type="molecule type" value="Genomic_DNA"/>
</dbReference>
<dbReference type="RefSeq" id="WP_003358072.1">
    <property type="nucleotide sequence ID" value="NC_010520.1"/>
</dbReference>
<dbReference type="SMR" id="B1L0B0"/>
<dbReference type="KEGG" id="cbl:CLK_2461"/>
<dbReference type="HOGENOM" id="CLU_022060_0_1_9"/>
<dbReference type="UniPathway" id="UPA00392"/>
<dbReference type="GO" id="GO:0005829">
    <property type="term" value="C:cytosol"/>
    <property type="evidence" value="ECO:0007669"/>
    <property type="project" value="TreeGrafter"/>
</dbReference>
<dbReference type="GO" id="GO:0046872">
    <property type="term" value="F:metal ion binding"/>
    <property type="evidence" value="ECO:0007669"/>
    <property type="project" value="UniProtKB-KW"/>
</dbReference>
<dbReference type="GO" id="GO:0008479">
    <property type="term" value="F:tRNA-guanosine(34) queuine transglycosylase activity"/>
    <property type="evidence" value="ECO:0007669"/>
    <property type="project" value="UniProtKB-UniRule"/>
</dbReference>
<dbReference type="GO" id="GO:0008616">
    <property type="term" value="P:queuosine biosynthetic process"/>
    <property type="evidence" value="ECO:0007669"/>
    <property type="project" value="UniProtKB-UniRule"/>
</dbReference>
<dbReference type="GO" id="GO:0002099">
    <property type="term" value="P:tRNA wobble guanine modification"/>
    <property type="evidence" value="ECO:0007669"/>
    <property type="project" value="TreeGrafter"/>
</dbReference>
<dbReference type="GO" id="GO:0101030">
    <property type="term" value="P:tRNA-guanine transglycosylation"/>
    <property type="evidence" value="ECO:0007669"/>
    <property type="project" value="InterPro"/>
</dbReference>
<dbReference type="FunFam" id="3.20.20.105:FF:000001">
    <property type="entry name" value="Queuine tRNA-ribosyltransferase"/>
    <property type="match status" value="1"/>
</dbReference>
<dbReference type="Gene3D" id="3.20.20.105">
    <property type="entry name" value="Queuine tRNA-ribosyltransferase-like"/>
    <property type="match status" value="1"/>
</dbReference>
<dbReference type="HAMAP" id="MF_00168">
    <property type="entry name" value="Q_tRNA_Tgt"/>
    <property type="match status" value="1"/>
</dbReference>
<dbReference type="InterPro" id="IPR050076">
    <property type="entry name" value="ArchSynthase1/Queuine_TRR"/>
</dbReference>
<dbReference type="InterPro" id="IPR004803">
    <property type="entry name" value="TGT"/>
</dbReference>
<dbReference type="InterPro" id="IPR036511">
    <property type="entry name" value="TGT-like_sf"/>
</dbReference>
<dbReference type="InterPro" id="IPR002616">
    <property type="entry name" value="tRNA_ribo_trans-like"/>
</dbReference>
<dbReference type="NCBIfam" id="TIGR00430">
    <property type="entry name" value="Q_tRNA_tgt"/>
    <property type="match status" value="1"/>
</dbReference>
<dbReference type="NCBIfam" id="TIGR00449">
    <property type="entry name" value="tgt_general"/>
    <property type="match status" value="1"/>
</dbReference>
<dbReference type="PANTHER" id="PTHR46499">
    <property type="entry name" value="QUEUINE TRNA-RIBOSYLTRANSFERASE"/>
    <property type="match status" value="1"/>
</dbReference>
<dbReference type="PANTHER" id="PTHR46499:SF1">
    <property type="entry name" value="QUEUINE TRNA-RIBOSYLTRANSFERASE"/>
    <property type="match status" value="1"/>
</dbReference>
<dbReference type="Pfam" id="PF01702">
    <property type="entry name" value="TGT"/>
    <property type="match status" value="1"/>
</dbReference>
<dbReference type="SUPFAM" id="SSF51713">
    <property type="entry name" value="tRNA-guanine transglycosylase"/>
    <property type="match status" value="1"/>
</dbReference>